<evidence type="ECO:0000255" key="1">
    <source>
        <dbReference type="HAMAP-Rule" id="MF_00360"/>
    </source>
</evidence>
<evidence type="ECO:0000256" key="2">
    <source>
        <dbReference type="SAM" id="MobiDB-lite"/>
    </source>
</evidence>
<evidence type="ECO:0000305" key="3"/>
<feature type="chain" id="PRO_0000229579" description="Small ribosomal subunit protein bS6">
    <location>
        <begin position="1"/>
        <end position="117"/>
    </location>
</feature>
<feature type="region of interest" description="Disordered" evidence="2">
    <location>
        <begin position="96"/>
        <end position="117"/>
    </location>
</feature>
<feature type="compositionally biased region" description="Basic and acidic residues" evidence="2">
    <location>
        <begin position="105"/>
        <end position="117"/>
    </location>
</feature>
<reference key="1">
    <citation type="journal article" date="2004" name="Nature">
        <title>Genome sequence of Silicibacter pomeroyi reveals adaptations to the marine environment.</title>
        <authorList>
            <person name="Moran M.A."/>
            <person name="Buchan A."/>
            <person name="Gonzalez J.M."/>
            <person name="Heidelberg J.F."/>
            <person name="Whitman W.B."/>
            <person name="Kiene R.P."/>
            <person name="Henriksen J.R."/>
            <person name="King G.M."/>
            <person name="Belas R."/>
            <person name="Fuqua C."/>
            <person name="Brinkac L.M."/>
            <person name="Lewis M."/>
            <person name="Johri S."/>
            <person name="Weaver B."/>
            <person name="Pai G."/>
            <person name="Eisen J.A."/>
            <person name="Rahe E."/>
            <person name="Sheldon W.M."/>
            <person name="Ye W."/>
            <person name="Miller T.R."/>
            <person name="Carlton J."/>
            <person name="Rasko D.A."/>
            <person name="Paulsen I.T."/>
            <person name="Ren Q."/>
            <person name="Daugherty S.C."/>
            <person name="DeBoy R.T."/>
            <person name="Dodson R.J."/>
            <person name="Durkin A.S."/>
            <person name="Madupu R."/>
            <person name="Nelson W.C."/>
            <person name="Sullivan S.A."/>
            <person name="Rosovitz M.J."/>
            <person name="Haft D.H."/>
            <person name="Selengut J."/>
            <person name="Ward N."/>
        </authorList>
    </citation>
    <scope>NUCLEOTIDE SEQUENCE [LARGE SCALE GENOMIC DNA]</scope>
    <source>
        <strain>ATCC 700808 / DSM 15171 / DSS-3</strain>
    </source>
</reference>
<reference key="2">
    <citation type="journal article" date="2014" name="Stand. Genomic Sci.">
        <title>An updated genome annotation for the model marine bacterium Ruegeria pomeroyi DSS-3.</title>
        <authorList>
            <person name="Rivers A.R."/>
            <person name="Smith C.B."/>
            <person name="Moran M.A."/>
        </authorList>
    </citation>
    <scope>GENOME REANNOTATION</scope>
    <source>
        <strain>ATCC 700808 / DSM 15171 / DSS-3</strain>
    </source>
</reference>
<sequence length="117" mass="13580">MPLYEHVMIARQDLSNTQAEGLIEHFGAVLSDNGGSLVDHEYWGVKTMAYKINKNRKGHYAFLRTDAPASAVQEMERLMRLHDDVMRVLTIKVDEHAEGPSVQMQKRDERDSRRERR</sequence>
<gene>
    <name evidence="1" type="primary">rpsF</name>
    <name type="ordered locus">SPO2281</name>
</gene>
<comment type="function">
    <text evidence="1">Binds together with bS18 to 16S ribosomal RNA.</text>
</comment>
<comment type="similarity">
    <text evidence="1">Belongs to the bacterial ribosomal protein bS6 family.</text>
</comment>
<keyword id="KW-1185">Reference proteome</keyword>
<keyword id="KW-0687">Ribonucleoprotein</keyword>
<keyword id="KW-0689">Ribosomal protein</keyword>
<keyword id="KW-0694">RNA-binding</keyword>
<keyword id="KW-0699">rRNA-binding</keyword>
<protein>
    <recommendedName>
        <fullName evidence="1">Small ribosomal subunit protein bS6</fullName>
    </recommendedName>
    <alternativeName>
        <fullName evidence="3">30S ribosomal protein S6</fullName>
    </alternativeName>
</protein>
<name>RS6_RUEPO</name>
<organism>
    <name type="scientific">Ruegeria pomeroyi (strain ATCC 700808 / DSM 15171 / DSS-3)</name>
    <name type="common">Silicibacter pomeroyi</name>
    <dbReference type="NCBI Taxonomy" id="246200"/>
    <lineage>
        <taxon>Bacteria</taxon>
        <taxon>Pseudomonadati</taxon>
        <taxon>Pseudomonadota</taxon>
        <taxon>Alphaproteobacteria</taxon>
        <taxon>Rhodobacterales</taxon>
        <taxon>Roseobacteraceae</taxon>
        <taxon>Ruegeria</taxon>
    </lineage>
</organism>
<dbReference type="EMBL" id="CP000031">
    <property type="protein sequence ID" value="AAV95545.1"/>
    <property type="molecule type" value="Genomic_DNA"/>
</dbReference>
<dbReference type="RefSeq" id="WP_011048000.1">
    <property type="nucleotide sequence ID" value="NC_003911.12"/>
</dbReference>
<dbReference type="SMR" id="Q5LR50"/>
<dbReference type="STRING" id="246200.SPO2281"/>
<dbReference type="PaxDb" id="246200-SPO2281"/>
<dbReference type="KEGG" id="sil:SPO2281"/>
<dbReference type="eggNOG" id="COG0360">
    <property type="taxonomic scope" value="Bacteria"/>
</dbReference>
<dbReference type="HOGENOM" id="CLU_113441_2_0_5"/>
<dbReference type="OrthoDB" id="9812702at2"/>
<dbReference type="Proteomes" id="UP000001023">
    <property type="component" value="Chromosome"/>
</dbReference>
<dbReference type="GO" id="GO:0022627">
    <property type="term" value="C:cytosolic small ribosomal subunit"/>
    <property type="evidence" value="ECO:0007669"/>
    <property type="project" value="TreeGrafter"/>
</dbReference>
<dbReference type="GO" id="GO:0070181">
    <property type="term" value="F:small ribosomal subunit rRNA binding"/>
    <property type="evidence" value="ECO:0007669"/>
    <property type="project" value="TreeGrafter"/>
</dbReference>
<dbReference type="GO" id="GO:0003735">
    <property type="term" value="F:structural constituent of ribosome"/>
    <property type="evidence" value="ECO:0007669"/>
    <property type="project" value="InterPro"/>
</dbReference>
<dbReference type="GO" id="GO:0006412">
    <property type="term" value="P:translation"/>
    <property type="evidence" value="ECO:0007669"/>
    <property type="project" value="UniProtKB-UniRule"/>
</dbReference>
<dbReference type="CDD" id="cd00473">
    <property type="entry name" value="bS6"/>
    <property type="match status" value="1"/>
</dbReference>
<dbReference type="Gene3D" id="3.30.70.60">
    <property type="match status" value="1"/>
</dbReference>
<dbReference type="HAMAP" id="MF_00360">
    <property type="entry name" value="Ribosomal_bS6"/>
    <property type="match status" value="1"/>
</dbReference>
<dbReference type="InterPro" id="IPR000529">
    <property type="entry name" value="Ribosomal_bS6"/>
</dbReference>
<dbReference type="InterPro" id="IPR035980">
    <property type="entry name" value="Ribosomal_bS6_sf"/>
</dbReference>
<dbReference type="InterPro" id="IPR020814">
    <property type="entry name" value="Ribosomal_S6_plastid/chlpt"/>
</dbReference>
<dbReference type="InterPro" id="IPR014717">
    <property type="entry name" value="Transl_elong_EF1B/ribsomal_bS6"/>
</dbReference>
<dbReference type="NCBIfam" id="TIGR00166">
    <property type="entry name" value="S6"/>
    <property type="match status" value="1"/>
</dbReference>
<dbReference type="PANTHER" id="PTHR21011">
    <property type="entry name" value="MITOCHONDRIAL 28S RIBOSOMAL PROTEIN S6"/>
    <property type="match status" value="1"/>
</dbReference>
<dbReference type="PANTHER" id="PTHR21011:SF1">
    <property type="entry name" value="SMALL RIBOSOMAL SUBUNIT PROTEIN BS6M"/>
    <property type="match status" value="1"/>
</dbReference>
<dbReference type="Pfam" id="PF01250">
    <property type="entry name" value="Ribosomal_S6"/>
    <property type="match status" value="1"/>
</dbReference>
<dbReference type="SUPFAM" id="SSF54995">
    <property type="entry name" value="Ribosomal protein S6"/>
    <property type="match status" value="1"/>
</dbReference>
<accession>Q5LR50</accession>
<proteinExistence type="inferred from homology"/>